<feature type="chain" id="PRO_0000456670" description="Anti-Pycsar protein Apyc1">
    <location>
        <begin position="1"/>
        <end position="259"/>
    </location>
</feature>
<feature type="region of interest" description="Beta-lactamase-like" evidence="2">
    <location>
        <begin position="21"/>
        <end position="233"/>
    </location>
</feature>
<feature type="binding site" evidence="2">
    <location>
        <position position="64"/>
    </location>
    <ligand>
        <name>Zn(2+)</name>
        <dbReference type="ChEBI" id="CHEBI:29105"/>
        <label>2</label>
    </ligand>
</feature>
<feature type="binding site" evidence="1">
    <location>
        <position position="66"/>
    </location>
    <ligand>
        <name>Zn(2+)</name>
        <dbReference type="ChEBI" id="CHEBI:29105"/>
        <label>2</label>
    </ligand>
</feature>
<feature type="binding site" evidence="3">
    <location>
        <position position="68"/>
    </location>
    <ligand>
        <name>Zn(2+)</name>
        <dbReference type="ChEBI" id="CHEBI:29105"/>
        <label>1</label>
    </ligand>
</feature>
<feature type="binding site" evidence="3">
    <location>
        <position position="69"/>
    </location>
    <ligand>
        <name>Zn(2+)</name>
        <dbReference type="ChEBI" id="CHEBI:29105"/>
        <label>1</label>
    </ligand>
</feature>
<feature type="binding site" evidence="2">
    <location>
        <position position="154"/>
    </location>
    <ligand>
        <name>Zn(2+)</name>
        <dbReference type="ChEBI" id="CHEBI:29105"/>
        <label>2</label>
    </ligand>
</feature>
<feature type="binding site" evidence="3">
    <location>
        <position position="178"/>
    </location>
    <ligand>
        <name>Zn(2+)</name>
        <dbReference type="ChEBI" id="CHEBI:29105"/>
        <label>1</label>
    </ligand>
</feature>
<feature type="binding site" evidence="3">
    <location>
        <position position="233"/>
    </location>
    <ligand>
        <name>Zn(2+)</name>
        <dbReference type="ChEBI" id="CHEBI:29105"/>
        <label>1</label>
    </ligand>
</feature>
<accession>A0A516KNH9</accession>
<name>ACPY1_BPGO7</name>
<gene>
    <name evidence="7" type="ORF">Goe7_c01210</name>
</gene>
<organism>
    <name type="scientific">Bacillus phage vB_BveM-Goe7</name>
    <dbReference type="NCBI Taxonomy" id="2593639"/>
    <lineage>
        <taxon>Viruses</taxon>
        <taxon>Duplodnaviria</taxon>
        <taxon>Heunggongvirae</taxon>
        <taxon>Uroviricota</taxon>
        <taxon>Caudoviricetes</taxon>
        <taxon>Herelleviridae</taxon>
        <taxon>Bastillevirinae</taxon>
        <taxon>Grisebachstrassevirus</taxon>
    </lineage>
</organism>
<sequence length="259" mass="29299">MLDTTKLTMVGTGSAFSKKFYNNSALVTFTNGYKLLIDCGHSVPKGLHDLGFPLESLDGILITHTHADHIGGLEEVALYNKFVLGGRKIDLLVPEPLVEPLWNDSLNGGLRYDDSRELELDDYFTVRSLKTSDCGAARTQIDENIAFTLYTTLHVSHMKSYAVGLIDRGEEKVFYSSDTVFDEYLLDYALTMFPWVFHDCQLFTGGVHASLDELLGYTRYIPEKQQNKIFLMHYGDNVEEFIGKTGRMRFAEQGREIIL</sequence>
<proteinExistence type="evidence at protein level"/>
<keyword id="KW-0945">Host-virus interaction</keyword>
<keyword id="KW-0378">Hydrolase</keyword>
<keyword id="KW-1090">Inhibition of host innate immune response by virus</keyword>
<keyword id="KW-0479">Metal-binding</keyword>
<keyword id="KW-0899">Viral immunoevasion</keyword>
<keyword id="KW-0862">Zinc</keyword>
<evidence type="ECO:0000250" key="1">
    <source>
        <dbReference type="UniProtKB" id="A0A2W1NDJ7"/>
    </source>
</evidence>
<evidence type="ECO:0000250" key="2">
    <source>
        <dbReference type="UniProtKB" id="A0A345MJY6"/>
    </source>
</evidence>
<evidence type="ECO:0000250" key="3">
    <source>
        <dbReference type="UniProtKB" id="P0DTL1"/>
    </source>
</evidence>
<evidence type="ECO:0000269" key="4">
    <source>
    </source>
</evidence>
<evidence type="ECO:0000303" key="5">
    <source>
    </source>
</evidence>
<evidence type="ECO:0000305" key="6"/>
<evidence type="ECO:0000312" key="7">
    <source>
        <dbReference type="EMBL" id="QDP43146.1"/>
    </source>
</evidence>
<protein>
    <recommendedName>
        <fullName evidence="5">Anti-Pycsar protein Apyc1</fullName>
        <shortName evidence="5">Apyc1</shortName>
    </recommendedName>
</protein>
<comment type="function">
    <text evidence="4">Counteracts the host Pycsar antiviral defense system. Phosphodiesterase that enables metal-dependent hydrolysis of host cyclic nucleotide Pycsar defense signals such as cCMP and cUMP.</text>
</comment>
<comment type="catalytic activity">
    <reaction evidence="4">
        <text>3',5'-cyclic CMP + H2O = CMP + H(+)</text>
        <dbReference type="Rhea" id="RHEA:72675"/>
        <dbReference type="ChEBI" id="CHEBI:15377"/>
        <dbReference type="ChEBI" id="CHEBI:15378"/>
        <dbReference type="ChEBI" id="CHEBI:58003"/>
        <dbReference type="ChEBI" id="CHEBI:60377"/>
    </reaction>
    <physiologicalReaction direction="left-to-right" evidence="4">
        <dbReference type="Rhea" id="RHEA:72676"/>
    </physiologicalReaction>
</comment>
<comment type="catalytic activity">
    <reaction evidence="4">
        <text>3',5'-cyclic UMP + H2O = UMP + H(+)</text>
        <dbReference type="Rhea" id="RHEA:70575"/>
        <dbReference type="ChEBI" id="CHEBI:15377"/>
        <dbReference type="ChEBI" id="CHEBI:15378"/>
        <dbReference type="ChEBI" id="CHEBI:57865"/>
        <dbReference type="ChEBI" id="CHEBI:184387"/>
    </reaction>
    <physiologicalReaction direction="left-to-right" evidence="4">
        <dbReference type="Rhea" id="RHEA:70576"/>
    </physiologicalReaction>
</comment>
<comment type="cofactor">
    <cofactor evidence="2">
        <name>Zn(2+)</name>
        <dbReference type="ChEBI" id="CHEBI:29105"/>
    </cofactor>
    <text evidence="2">Coordinates 2 Zn(2+) ions. One protomer coordinates the metal ions and the opposing protomer provides the catalytic residues required for cCMP hydrolysis.</text>
</comment>
<comment type="subunit">
    <text evidence="3">Homodimer.</text>
</comment>
<comment type="similarity">
    <text evidence="6">Belongs to the anti-Pycsar protein Apyc1 family.</text>
</comment>
<organismHost>
    <name type="scientific">Bacillus velezensis</name>
    <dbReference type="NCBI Taxonomy" id="492670"/>
</organismHost>
<dbReference type="EMBL" id="MN043730">
    <property type="protein sequence ID" value="QDP43146.1"/>
    <property type="molecule type" value="Genomic_DNA"/>
</dbReference>
<dbReference type="SMR" id="A0A516KNH9"/>
<dbReference type="Proteomes" id="UP000318125">
    <property type="component" value="Genome"/>
</dbReference>
<dbReference type="GO" id="GO:0042781">
    <property type="term" value="F:3'-tRNA processing endoribonuclease activity"/>
    <property type="evidence" value="ECO:0007669"/>
    <property type="project" value="TreeGrafter"/>
</dbReference>
<dbReference type="GO" id="GO:0046872">
    <property type="term" value="F:metal ion binding"/>
    <property type="evidence" value="ECO:0007669"/>
    <property type="project" value="UniProtKB-KW"/>
</dbReference>
<dbReference type="GO" id="GO:0052170">
    <property type="term" value="P:symbiont-mediated suppression of host innate immune response"/>
    <property type="evidence" value="ECO:0007669"/>
    <property type="project" value="UniProtKB-KW"/>
</dbReference>
<dbReference type="Gene3D" id="3.60.15.10">
    <property type="entry name" value="Ribonuclease Z/Hydroxyacylglutathione hydrolase-like"/>
    <property type="match status" value="1"/>
</dbReference>
<dbReference type="InterPro" id="IPR056308">
    <property type="entry name" value="Anti-Pycsar_Apyc1"/>
</dbReference>
<dbReference type="InterPro" id="IPR001279">
    <property type="entry name" value="Metallo-B-lactamas"/>
</dbReference>
<dbReference type="InterPro" id="IPR036866">
    <property type="entry name" value="RibonucZ/Hydroxyglut_hydro"/>
</dbReference>
<dbReference type="PANTHER" id="PTHR46018">
    <property type="entry name" value="ZINC PHOSPHODIESTERASE ELAC PROTEIN 1"/>
    <property type="match status" value="1"/>
</dbReference>
<dbReference type="PANTHER" id="PTHR46018:SF2">
    <property type="entry name" value="ZINC PHOSPHODIESTERASE ELAC PROTEIN 1"/>
    <property type="match status" value="1"/>
</dbReference>
<dbReference type="Pfam" id="PF23023">
    <property type="entry name" value="Anti-Pycsar_Apyc1"/>
    <property type="match status" value="1"/>
</dbReference>
<dbReference type="SMART" id="SM00849">
    <property type="entry name" value="Lactamase_B"/>
    <property type="match status" value="1"/>
</dbReference>
<dbReference type="SUPFAM" id="SSF56281">
    <property type="entry name" value="Metallo-hydrolase/oxidoreductase"/>
    <property type="match status" value="1"/>
</dbReference>
<reference key="1">
    <citation type="submission" date="2019-06" db="EMBL/GenBank/DDBJ databases">
        <authorList>
            <person name="Hertel R."/>
        </authorList>
    </citation>
    <scope>NUCLEOTIDE SEQUENCE [LARGE SCALE GENOMIC DNA]</scope>
</reference>
<reference key="2">
    <citation type="journal article" date="2022" name="Nature">
        <title>Phage anti-CBASS and anti-Pycsar nucleases subvert bacterial immunity.</title>
        <authorList>
            <person name="Hobbs S.J."/>
            <person name="Wein T."/>
            <person name="Lu A."/>
            <person name="Morehouse B.R."/>
            <person name="Schnabel J."/>
            <person name="Leavitt A."/>
            <person name="Yirmiya E."/>
            <person name="Sorek R."/>
            <person name="Kranzusch P.J."/>
        </authorList>
    </citation>
    <scope>FUNCTION</scope>
    <scope>CATALYTIC ACTIVITY</scope>
</reference>